<dbReference type="EMBL" id="CP000927">
    <property type="protein sequence ID" value="ABZ71932.1"/>
    <property type="molecule type" value="Genomic_DNA"/>
</dbReference>
<dbReference type="SMR" id="B0SZ21"/>
<dbReference type="STRING" id="366602.Caul_2805"/>
<dbReference type="KEGG" id="cak:Caul_2805"/>
<dbReference type="eggNOG" id="COG0052">
    <property type="taxonomic scope" value="Bacteria"/>
</dbReference>
<dbReference type="HOGENOM" id="CLU_040318_2_3_5"/>
<dbReference type="OrthoDB" id="9808036at2"/>
<dbReference type="GO" id="GO:0022627">
    <property type="term" value="C:cytosolic small ribosomal subunit"/>
    <property type="evidence" value="ECO:0007669"/>
    <property type="project" value="TreeGrafter"/>
</dbReference>
<dbReference type="GO" id="GO:0003735">
    <property type="term" value="F:structural constituent of ribosome"/>
    <property type="evidence" value="ECO:0007669"/>
    <property type="project" value="InterPro"/>
</dbReference>
<dbReference type="GO" id="GO:0006412">
    <property type="term" value="P:translation"/>
    <property type="evidence" value="ECO:0007669"/>
    <property type="project" value="UniProtKB-UniRule"/>
</dbReference>
<dbReference type="CDD" id="cd01425">
    <property type="entry name" value="RPS2"/>
    <property type="match status" value="1"/>
</dbReference>
<dbReference type="Gene3D" id="3.40.50.10490">
    <property type="entry name" value="Glucose-6-phosphate isomerase like protein, domain 1"/>
    <property type="match status" value="1"/>
</dbReference>
<dbReference type="Gene3D" id="1.10.287.610">
    <property type="entry name" value="Helix hairpin bin"/>
    <property type="match status" value="1"/>
</dbReference>
<dbReference type="HAMAP" id="MF_00291_B">
    <property type="entry name" value="Ribosomal_uS2_B"/>
    <property type="match status" value="1"/>
</dbReference>
<dbReference type="InterPro" id="IPR001865">
    <property type="entry name" value="Ribosomal_uS2"/>
</dbReference>
<dbReference type="InterPro" id="IPR005706">
    <property type="entry name" value="Ribosomal_uS2_bac/mit/plastid"/>
</dbReference>
<dbReference type="InterPro" id="IPR018130">
    <property type="entry name" value="Ribosomal_uS2_CS"/>
</dbReference>
<dbReference type="InterPro" id="IPR023591">
    <property type="entry name" value="Ribosomal_uS2_flav_dom_sf"/>
</dbReference>
<dbReference type="NCBIfam" id="TIGR01011">
    <property type="entry name" value="rpsB_bact"/>
    <property type="match status" value="1"/>
</dbReference>
<dbReference type="PANTHER" id="PTHR12534">
    <property type="entry name" value="30S RIBOSOMAL PROTEIN S2 PROKARYOTIC AND ORGANELLAR"/>
    <property type="match status" value="1"/>
</dbReference>
<dbReference type="PANTHER" id="PTHR12534:SF0">
    <property type="entry name" value="SMALL RIBOSOMAL SUBUNIT PROTEIN US2M"/>
    <property type="match status" value="1"/>
</dbReference>
<dbReference type="Pfam" id="PF00318">
    <property type="entry name" value="Ribosomal_S2"/>
    <property type="match status" value="1"/>
</dbReference>
<dbReference type="PRINTS" id="PR00395">
    <property type="entry name" value="RIBOSOMALS2"/>
</dbReference>
<dbReference type="SUPFAM" id="SSF52313">
    <property type="entry name" value="Ribosomal protein S2"/>
    <property type="match status" value="1"/>
</dbReference>
<dbReference type="PROSITE" id="PS00962">
    <property type="entry name" value="RIBOSOMAL_S2_1"/>
    <property type="match status" value="1"/>
</dbReference>
<dbReference type="PROSITE" id="PS00963">
    <property type="entry name" value="RIBOSOMAL_S2_2"/>
    <property type="match status" value="1"/>
</dbReference>
<proteinExistence type="inferred from homology"/>
<keyword id="KW-0687">Ribonucleoprotein</keyword>
<keyword id="KW-0689">Ribosomal protein</keyword>
<name>RS2_CAUSK</name>
<accession>B0SZ21</accession>
<evidence type="ECO:0000255" key="1">
    <source>
        <dbReference type="HAMAP-Rule" id="MF_00291"/>
    </source>
</evidence>
<evidence type="ECO:0000256" key="2">
    <source>
        <dbReference type="SAM" id="MobiDB-lite"/>
    </source>
</evidence>
<evidence type="ECO:0000305" key="3"/>
<sequence length="313" mass="33166">MALPEFSMRQLLEAGAHFGHQTHRWNPKMDRYIFGSRSNIHIIDLSQSIPLLHQALVKVREVAAAGGRVLFVGTKRQASDPVATAAKRCAQYYVNHRWLGGTLTNWRTVSGSIARLRELEGIMGGESAGRSKKELLQLTRERDKLELSLGGIKDMGGIPDIMFVIDTNKEAIAILEARKLNIPVVAILDTNCDPDGITYPIPGNDDAARALQLYCDLIADAVLDGLAAGQANSGVDLGASIAPIEPTLARELTPEPVAEAAAPEVAAAEVAEQEAAFEAAAAPAAPAVEPAPEAAQEATAEAIEAVAEEPAAS</sequence>
<gene>
    <name evidence="1" type="primary">rpsB</name>
    <name type="ordered locus">Caul_2805</name>
</gene>
<feature type="chain" id="PRO_1000078871" description="Small ribosomal subunit protein uS2">
    <location>
        <begin position="1"/>
        <end position="313"/>
    </location>
</feature>
<feature type="region of interest" description="Disordered" evidence="2">
    <location>
        <begin position="281"/>
        <end position="301"/>
    </location>
</feature>
<comment type="similarity">
    <text evidence="1">Belongs to the universal ribosomal protein uS2 family.</text>
</comment>
<protein>
    <recommendedName>
        <fullName evidence="1">Small ribosomal subunit protein uS2</fullName>
    </recommendedName>
    <alternativeName>
        <fullName evidence="3">30S ribosomal protein S2</fullName>
    </alternativeName>
</protein>
<reference key="1">
    <citation type="submission" date="2008-01" db="EMBL/GenBank/DDBJ databases">
        <title>Complete sequence of chromosome of Caulobacter sp. K31.</title>
        <authorList>
            <consortium name="US DOE Joint Genome Institute"/>
            <person name="Copeland A."/>
            <person name="Lucas S."/>
            <person name="Lapidus A."/>
            <person name="Barry K."/>
            <person name="Glavina del Rio T."/>
            <person name="Dalin E."/>
            <person name="Tice H."/>
            <person name="Pitluck S."/>
            <person name="Bruce D."/>
            <person name="Goodwin L."/>
            <person name="Thompson L.S."/>
            <person name="Brettin T."/>
            <person name="Detter J.C."/>
            <person name="Han C."/>
            <person name="Schmutz J."/>
            <person name="Larimer F."/>
            <person name="Land M."/>
            <person name="Hauser L."/>
            <person name="Kyrpides N."/>
            <person name="Kim E."/>
            <person name="Stephens C."/>
            <person name="Richardson P."/>
        </authorList>
    </citation>
    <scope>NUCLEOTIDE SEQUENCE [LARGE SCALE GENOMIC DNA]</scope>
    <source>
        <strain>K31</strain>
    </source>
</reference>
<organism>
    <name type="scientific">Caulobacter sp. (strain K31)</name>
    <dbReference type="NCBI Taxonomy" id="366602"/>
    <lineage>
        <taxon>Bacteria</taxon>
        <taxon>Pseudomonadati</taxon>
        <taxon>Pseudomonadota</taxon>
        <taxon>Alphaproteobacteria</taxon>
        <taxon>Caulobacterales</taxon>
        <taxon>Caulobacteraceae</taxon>
        <taxon>Caulobacter</taxon>
    </lineage>
</organism>